<comment type="catalytic activity">
    <reaction evidence="1">
        <text>D-serine = pyruvate + NH4(+)</text>
        <dbReference type="Rhea" id="RHEA:13977"/>
        <dbReference type="ChEBI" id="CHEBI:15361"/>
        <dbReference type="ChEBI" id="CHEBI:28938"/>
        <dbReference type="ChEBI" id="CHEBI:35247"/>
        <dbReference type="EC" id="4.3.1.18"/>
    </reaction>
</comment>
<comment type="cofactor">
    <cofactor evidence="1">
        <name>pyridoxal 5'-phosphate</name>
        <dbReference type="ChEBI" id="CHEBI:597326"/>
    </cofactor>
</comment>
<comment type="similarity">
    <text evidence="1">Belongs to the serine/threonine dehydratase family. DsdA subfamily.</text>
</comment>
<protein>
    <recommendedName>
        <fullName evidence="1">Probable D-serine dehydratase</fullName>
        <ecNumber evidence="1">4.3.1.18</ecNumber>
    </recommendedName>
    <alternativeName>
        <fullName evidence="1">D-serine deaminase</fullName>
        <shortName evidence="1">DSD</shortName>
    </alternativeName>
</protein>
<dbReference type="EC" id="4.3.1.18" evidence="1"/>
<dbReference type="EMBL" id="CP000539">
    <property type="protein sequence ID" value="ABM42413.1"/>
    <property type="molecule type" value="Genomic_DNA"/>
</dbReference>
<dbReference type="SMR" id="A1W838"/>
<dbReference type="STRING" id="232721.Ajs_2250"/>
<dbReference type="KEGG" id="ajs:Ajs_2250"/>
<dbReference type="eggNOG" id="COG3048">
    <property type="taxonomic scope" value="Bacteria"/>
</dbReference>
<dbReference type="HOGENOM" id="CLU_035707_0_0_4"/>
<dbReference type="Proteomes" id="UP000000645">
    <property type="component" value="Chromosome"/>
</dbReference>
<dbReference type="GO" id="GO:0008721">
    <property type="term" value="F:D-serine ammonia-lyase activity"/>
    <property type="evidence" value="ECO:0007669"/>
    <property type="project" value="UniProtKB-EC"/>
</dbReference>
<dbReference type="GO" id="GO:0016836">
    <property type="term" value="F:hydro-lyase activity"/>
    <property type="evidence" value="ECO:0007669"/>
    <property type="project" value="UniProtKB-UniRule"/>
</dbReference>
<dbReference type="GO" id="GO:0030170">
    <property type="term" value="F:pyridoxal phosphate binding"/>
    <property type="evidence" value="ECO:0007669"/>
    <property type="project" value="InterPro"/>
</dbReference>
<dbReference type="GO" id="GO:0036088">
    <property type="term" value="P:D-serine catabolic process"/>
    <property type="evidence" value="ECO:0007669"/>
    <property type="project" value="TreeGrafter"/>
</dbReference>
<dbReference type="GO" id="GO:0009097">
    <property type="term" value="P:isoleucine biosynthetic process"/>
    <property type="evidence" value="ECO:0007669"/>
    <property type="project" value="TreeGrafter"/>
</dbReference>
<dbReference type="Gene3D" id="3.40.50.1100">
    <property type="match status" value="2"/>
</dbReference>
<dbReference type="HAMAP" id="MF_01030">
    <property type="entry name" value="D_Ser_dehydrat"/>
    <property type="match status" value="1"/>
</dbReference>
<dbReference type="InterPro" id="IPR011780">
    <property type="entry name" value="D_Ser_am_lyase"/>
</dbReference>
<dbReference type="InterPro" id="IPR050147">
    <property type="entry name" value="Ser/Thr_Dehydratase"/>
</dbReference>
<dbReference type="InterPro" id="IPR001926">
    <property type="entry name" value="TrpB-like_PALP"/>
</dbReference>
<dbReference type="InterPro" id="IPR036052">
    <property type="entry name" value="TrpB-like_PALP_sf"/>
</dbReference>
<dbReference type="NCBIfam" id="TIGR02035">
    <property type="entry name" value="D_Ser_am_lyase"/>
    <property type="match status" value="1"/>
</dbReference>
<dbReference type="NCBIfam" id="NF002823">
    <property type="entry name" value="PRK02991.1"/>
    <property type="match status" value="1"/>
</dbReference>
<dbReference type="PANTHER" id="PTHR48078:SF9">
    <property type="entry name" value="D-SERINE DEHYDRATASE"/>
    <property type="match status" value="1"/>
</dbReference>
<dbReference type="PANTHER" id="PTHR48078">
    <property type="entry name" value="THREONINE DEHYDRATASE, MITOCHONDRIAL-RELATED"/>
    <property type="match status" value="1"/>
</dbReference>
<dbReference type="Pfam" id="PF00291">
    <property type="entry name" value="PALP"/>
    <property type="match status" value="1"/>
</dbReference>
<dbReference type="SUPFAM" id="SSF53686">
    <property type="entry name" value="Tryptophan synthase beta subunit-like PLP-dependent enzymes"/>
    <property type="match status" value="1"/>
</dbReference>
<keyword id="KW-0456">Lyase</keyword>
<keyword id="KW-0663">Pyridoxal phosphate</keyword>
<reference key="1">
    <citation type="submission" date="2006-12" db="EMBL/GenBank/DDBJ databases">
        <title>Complete sequence of chromosome 1 of Acidovorax sp. JS42.</title>
        <authorList>
            <person name="Copeland A."/>
            <person name="Lucas S."/>
            <person name="Lapidus A."/>
            <person name="Barry K."/>
            <person name="Detter J.C."/>
            <person name="Glavina del Rio T."/>
            <person name="Dalin E."/>
            <person name="Tice H."/>
            <person name="Pitluck S."/>
            <person name="Chertkov O."/>
            <person name="Brettin T."/>
            <person name="Bruce D."/>
            <person name="Han C."/>
            <person name="Tapia R."/>
            <person name="Gilna P."/>
            <person name="Schmutz J."/>
            <person name="Larimer F."/>
            <person name="Land M."/>
            <person name="Hauser L."/>
            <person name="Kyrpides N."/>
            <person name="Kim E."/>
            <person name="Stahl D."/>
            <person name="Richardson P."/>
        </authorList>
    </citation>
    <scope>NUCLEOTIDE SEQUENCE [LARGE SCALE GENOMIC DNA]</scope>
    <source>
        <strain>JS42</strain>
    </source>
</reference>
<organism>
    <name type="scientific">Acidovorax sp. (strain JS42)</name>
    <dbReference type="NCBI Taxonomy" id="232721"/>
    <lineage>
        <taxon>Bacteria</taxon>
        <taxon>Pseudomonadati</taxon>
        <taxon>Pseudomonadota</taxon>
        <taxon>Betaproteobacteria</taxon>
        <taxon>Burkholderiales</taxon>
        <taxon>Comamonadaceae</taxon>
        <taxon>Acidovorax</taxon>
    </lineage>
</organism>
<feature type="chain" id="PRO_0000291717" description="Probable D-serine dehydratase">
    <location>
        <begin position="1"/>
        <end position="451"/>
    </location>
</feature>
<feature type="modified residue" description="N6-(pyridoxal phosphate)lysine" evidence="1">
    <location>
        <position position="119"/>
    </location>
</feature>
<name>SDHD_ACISJ</name>
<accession>A1W838</accession>
<evidence type="ECO:0000255" key="1">
    <source>
        <dbReference type="HAMAP-Rule" id="MF_01030"/>
    </source>
</evidence>
<proteinExistence type="inferred from homology"/>
<sequence>MPSVVSPQDHLQDDAPAAQLRRAEPCLWLNPHRQPIPAARQAVAGDHISLDDTEKAAARFARFAPLLEGVFPELQATGGVIESPLLPASSLHAAAGLVAGQGALWIKADHRLPVAGSIKARGGIHEVLELAERLALQHGLLTPQSDADDYRALANPAARAVFARYTVAVGSTGNLGLSIGVAASALGFHAVVHMSADAKEWKKQRLRQRGVQVVEHAGDYEGAVAAGRAQAAQDPFSHFVDDERSLSLLLGYSAAALHLRQQLRDAGIVVDAQHPLFVYLPCGVGGAPAGITFGLRQVLGAHVHCFFAEPVQSPCFMVQMMAGQGAHPSVYDWGLTNRTEADGLAVPRASLPAAELMEPLLAGCFTVCDDTLFRQLVQVLDATGERIEPSAAAGLSGPGFLTGTETGRTWLHAQGLWPHLAQATHLVWTTGGLYVPPEAYARFEERGRALG</sequence>
<gene>
    <name evidence="1" type="primary">dsdA</name>
    <name type="ordered locus">Ajs_2250</name>
</gene>